<reference key="1">
    <citation type="journal article" date="1993" name="Appl. Environ. Microbiol.">
        <title>Cloning and mutagenesis of a cytochrome P-450 locus from Bradyrhizobium japonicum that is expressed anaerobically and symbiotically.</title>
        <authorList>
            <person name="Tully R.E."/>
            <person name="Keister D.L."/>
        </authorList>
    </citation>
    <scope>NUCLEOTIDE SEQUENCE [GENOMIC DNA]</scope>
    <source>
        <strain>JCM 10833 / BCRC 13528 / IAM 13628 / NBRC 14792 / USDA 110</strain>
    </source>
</reference>
<reference key="2">
    <citation type="journal article" date="1998" name="Biochim. Biophys. Acta">
        <title>Identification and sequencing of a cytochrome P450 gene cluster from Bradyrhizobium japonicum.</title>
        <authorList>
            <person name="Tully R.E."/>
            <person name="van Berkum P."/>
            <person name="Lovins K.W."/>
            <person name="Keister D.L."/>
        </authorList>
    </citation>
    <scope>NUCLEOTIDE SEQUENCE [GENOMIC DNA]</scope>
    <source>
        <strain>JCM 10833 / BCRC 13528 / IAM 13628 / NBRC 14792 / USDA 110</strain>
    </source>
</reference>
<reference key="3">
    <citation type="journal article" date="2002" name="DNA Res.">
        <title>Complete genomic sequence of nitrogen-fixing symbiotic bacterium Bradyrhizobium japonicum USDA110.</title>
        <authorList>
            <person name="Kaneko T."/>
            <person name="Nakamura Y."/>
            <person name="Sato S."/>
            <person name="Minamisawa K."/>
            <person name="Uchiumi T."/>
            <person name="Sasamoto S."/>
            <person name="Watanabe A."/>
            <person name="Idesawa K."/>
            <person name="Iriguchi M."/>
            <person name="Kawashima K."/>
            <person name="Kohara M."/>
            <person name="Matsumoto M."/>
            <person name="Shimpo S."/>
            <person name="Tsuruoka H."/>
            <person name="Wada T."/>
            <person name="Yamada M."/>
            <person name="Tabata S."/>
        </authorList>
    </citation>
    <scope>NUCLEOTIDE SEQUENCE [LARGE SCALE GENOMIC DNA]</scope>
    <source>
        <strain>JCM 10833 / BCRC 13528 / IAM 13628 / NBRC 14792 / USDA 110</strain>
    </source>
</reference>
<sequence>MDMLLNPLNRRHRLRHDIPVVPGAFPLVGHLPAVVCDLPRLLRRAERTLGSHFWLDFGPAGHLMTSLDPDALALLRHKDVSSGLIEDIAPELFGGTLVAQDGIAHRQARDAIQAALLPKGLTLAGIGELFAPVIRARVQRWRERGDVTILRETGDLMLKLIFSLMGIPAQDLPGWHRKYRQLLQLIVAPPVDLPGLPLRRGRAARDWIDARLREFVRAAREHASRTGLINDMVSAFDRSDDALSDDVLVANIRLLLLGGHDTTASTMAWMVIELARQPGLWDALVEEAQRVGAVPTRHADLAQCPVAEALFRETLRVHPATPLLVRRALRELRIGQQRIPTGTDLCIPLLHFSTSALLHEAPDQFRLARWLQRTEPIRPVDMLQFGTGPHFCMGYHLVWLELVQFCIALALTMHEAGVRPRLLSGVEKGRRYYPTAHPSMTIRIGFS</sequence>
<name>CPXU_BRADU</name>
<gene>
    <name type="primary">cyp117</name>
    <name type="ordered locus">blr2147</name>
</gene>
<proteinExistence type="inferred from homology"/>
<protein>
    <recommendedName>
        <fullName>Cytochrome P450 BJ-4</fullName>
        <ecNumber>1.14.14.-</ecNumber>
    </recommendedName>
    <alternativeName>
        <fullName>Cytochrome P450 117</fullName>
    </alternativeName>
</protein>
<dbReference type="EC" id="1.14.14.-"/>
<dbReference type="EMBL" id="U12678">
    <property type="protein sequence ID" value="AAC28893.1"/>
    <property type="status" value="ALT_FRAME"/>
    <property type="molecule type" value="Genomic_DNA"/>
</dbReference>
<dbReference type="EMBL" id="BA000040">
    <property type="protein sequence ID" value="BAC47412.1"/>
    <property type="molecule type" value="Genomic_DNA"/>
</dbReference>
<dbReference type="PIR" id="I40212">
    <property type="entry name" value="I40212"/>
</dbReference>
<dbReference type="RefSeq" id="NP_768787.1">
    <property type="nucleotide sequence ID" value="NC_004463.1"/>
</dbReference>
<dbReference type="RefSeq" id="WP_011084941.1">
    <property type="nucleotide sequence ID" value="NC_004463.1"/>
</dbReference>
<dbReference type="SMR" id="Q59205"/>
<dbReference type="STRING" id="224911.AAV28_07580"/>
<dbReference type="EnsemblBacteria" id="BAC47412">
    <property type="protein sequence ID" value="BAC47412"/>
    <property type="gene ID" value="BAC47412"/>
</dbReference>
<dbReference type="GeneID" id="46489200"/>
<dbReference type="KEGG" id="bja:blr2147"/>
<dbReference type="PATRIC" id="fig|224911.44.peg.1663"/>
<dbReference type="eggNOG" id="COG2124">
    <property type="taxonomic scope" value="Bacteria"/>
</dbReference>
<dbReference type="HOGENOM" id="CLU_001570_5_1_5"/>
<dbReference type="InParanoid" id="Q59205"/>
<dbReference type="OrthoDB" id="9764248at2"/>
<dbReference type="PhylomeDB" id="Q59205"/>
<dbReference type="Proteomes" id="UP000002526">
    <property type="component" value="Chromosome"/>
</dbReference>
<dbReference type="GO" id="GO:0020037">
    <property type="term" value="F:heme binding"/>
    <property type="evidence" value="ECO:0007669"/>
    <property type="project" value="InterPro"/>
</dbReference>
<dbReference type="GO" id="GO:0005506">
    <property type="term" value="F:iron ion binding"/>
    <property type="evidence" value="ECO:0007669"/>
    <property type="project" value="InterPro"/>
</dbReference>
<dbReference type="GO" id="GO:0004497">
    <property type="term" value="F:monooxygenase activity"/>
    <property type="evidence" value="ECO:0007669"/>
    <property type="project" value="UniProtKB-KW"/>
</dbReference>
<dbReference type="GO" id="GO:0016491">
    <property type="term" value="F:oxidoreductase activity"/>
    <property type="evidence" value="ECO:0000318"/>
    <property type="project" value="GO_Central"/>
</dbReference>
<dbReference type="GO" id="GO:0016705">
    <property type="term" value="F:oxidoreductase activity, acting on paired donors, with incorporation or reduction of molecular oxygen"/>
    <property type="evidence" value="ECO:0007669"/>
    <property type="project" value="InterPro"/>
</dbReference>
<dbReference type="CDD" id="cd20614">
    <property type="entry name" value="CYPBJ-4-like"/>
    <property type="match status" value="1"/>
</dbReference>
<dbReference type="Gene3D" id="1.10.630.10">
    <property type="entry name" value="Cytochrome P450"/>
    <property type="match status" value="1"/>
</dbReference>
<dbReference type="InterPro" id="IPR001128">
    <property type="entry name" value="Cyt_P450"/>
</dbReference>
<dbReference type="InterPro" id="IPR017972">
    <property type="entry name" value="Cyt_P450_CS"/>
</dbReference>
<dbReference type="InterPro" id="IPR002403">
    <property type="entry name" value="Cyt_P450_E_grp-IV"/>
</dbReference>
<dbReference type="InterPro" id="IPR036396">
    <property type="entry name" value="Cyt_P450_sf"/>
</dbReference>
<dbReference type="PANTHER" id="PTHR24286">
    <property type="entry name" value="CYTOCHROME P450 26"/>
    <property type="match status" value="1"/>
</dbReference>
<dbReference type="PANTHER" id="PTHR24286:SF24">
    <property type="entry name" value="LANOSTEROL 14-ALPHA DEMETHYLASE"/>
    <property type="match status" value="1"/>
</dbReference>
<dbReference type="Pfam" id="PF00067">
    <property type="entry name" value="p450"/>
    <property type="match status" value="1"/>
</dbReference>
<dbReference type="PRINTS" id="PR00465">
    <property type="entry name" value="EP450IV"/>
</dbReference>
<dbReference type="PRINTS" id="PR00385">
    <property type="entry name" value="P450"/>
</dbReference>
<dbReference type="SUPFAM" id="SSF48264">
    <property type="entry name" value="Cytochrome P450"/>
    <property type="match status" value="1"/>
</dbReference>
<dbReference type="PROSITE" id="PS00086">
    <property type="entry name" value="CYTOCHROME_P450"/>
    <property type="match status" value="1"/>
</dbReference>
<accession>Q59205</accession>
<comment type="function">
    <text>Cytochromes P450 are a group of heme-thiolate monooxygenases. They oxidize a variety of structurally unrelated compounds, including steroids, fatty acids, and xenobiotics.</text>
</comment>
<comment type="cofactor">
    <cofactor evidence="1">
        <name>heme</name>
        <dbReference type="ChEBI" id="CHEBI:30413"/>
    </cofactor>
</comment>
<comment type="similarity">
    <text evidence="2">Belongs to the cytochrome P450 family.</text>
</comment>
<comment type="sequence caution" evidence="2">
    <conflict type="frameshift">
        <sequence resource="EMBL-CDS" id="AAC28893"/>
    </conflict>
</comment>
<keyword id="KW-0349">Heme</keyword>
<keyword id="KW-0408">Iron</keyword>
<keyword id="KW-0479">Metal-binding</keyword>
<keyword id="KW-0503">Monooxygenase</keyword>
<keyword id="KW-0560">Oxidoreductase</keyword>
<keyword id="KW-1185">Reference proteome</keyword>
<feature type="chain" id="PRO_0000052228" description="Cytochrome P450 BJ-4">
    <location>
        <begin position="1"/>
        <end position="447"/>
    </location>
</feature>
<feature type="binding site" description="axial binding residue" evidence="1">
    <location>
        <position position="392"/>
    </location>
    <ligand>
        <name>heme</name>
        <dbReference type="ChEBI" id="CHEBI:30413"/>
    </ligand>
    <ligandPart>
        <name>Fe</name>
        <dbReference type="ChEBI" id="CHEBI:18248"/>
    </ligandPart>
</feature>
<organism>
    <name type="scientific">Bradyrhizobium diazoefficiens (strain JCM 10833 / BCRC 13528 / IAM 13628 / NBRC 14792 / USDA 110)</name>
    <dbReference type="NCBI Taxonomy" id="224911"/>
    <lineage>
        <taxon>Bacteria</taxon>
        <taxon>Pseudomonadati</taxon>
        <taxon>Pseudomonadota</taxon>
        <taxon>Alphaproteobacteria</taxon>
        <taxon>Hyphomicrobiales</taxon>
        <taxon>Nitrobacteraceae</taxon>
        <taxon>Bradyrhizobium</taxon>
    </lineage>
</organism>
<evidence type="ECO:0000250" key="1"/>
<evidence type="ECO:0000305" key="2"/>